<name>RF2_THERP</name>
<protein>
    <recommendedName>
        <fullName evidence="1">Peptide chain release factor 2</fullName>
        <shortName evidence="1">RF-2</shortName>
    </recommendedName>
</protein>
<organism>
    <name type="scientific">Thermomicrobium roseum (strain ATCC 27502 / DSM 5159 / P-2)</name>
    <dbReference type="NCBI Taxonomy" id="309801"/>
    <lineage>
        <taxon>Bacteria</taxon>
        <taxon>Pseudomonadati</taxon>
        <taxon>Thermomicrobiota</taxon>
        <taxon>Thermomicrobia</taxon>
        <taxon>Thermomicrobiales</taxon>
        <taxon>Thermomicrobiaceae</taxon>
        <taxon>Thermomicrobium</taxon>
    </lineage>
</organism>
<comment type="function">
    <text evidence="1">Peptide chain release factor 2 directs the termination of translation in response to the peptide chain termination codons UGA and UAA.</text>
</comment>
<comment type="subcellular location">
    <subcellularLocation>
        <location evidence="1">Cytoplasm</location>
    </subcellularLocation>
</comment>
<comment type="PTM">
    <text evidence="1">Methylated by PrmC. Methylation increases the termination efficiency of RF2.</text>
</comment>
<comment type="similarity">
    <text evidence="1">Belongs to the prokaryotic/mitochondrial release factor family.</text>
</comment>
<dbReference type="EMBL" id="CP001275">
    <property type="protein sequence ID" value="ACM04523.1"/>
    <property type="molecule type" value="Genomic_DNA"/>
</dbReference>
<dbReference type="SMR" id="B9L0E3"/>
<dbReference type="STRING" id="309801.trd_1636"/>
<dbReference type="KEGG" id="tro:trd_1636"/>
<dbReference type="eggNOG" id="COG1186">
    <property type="taxonomic scope" value="Bacteria"/>
</dbReference>
<dbReference type="HOGENOM" id="CLU_3423163_0_0_0"/>
<dbReference type="Proteomes" id="UP000000447">
    <property type="component" value="Chromosome"/>
</dbReference>
<dbReference type="GO" id="GO:0005737">
    <property type="term" value="C:cytoplasm"/>
    <property type="evidence" value="ECO:0007669"/>
    <property type="project" value="UniProtKB-SubCell"/>
</dbReference>
<dbReference type="GO" id="GO:0016149">
    <property type="term" value="F:translation release factor activity, codon specific"/>
    <property type="evidence" value="ECO:0007669"/>
    <property type="project" value="UniProtKB-UniRule"/>
</dbReference>
<dbReference type="FunFam" id="3.30.160.20:FF:000010">
    <property type="entry name" value="Peptide chain release factor 2"/>
    <property type="match status" value="1"/>
</dbReference>
<dbReference type="Gene3D" id="3.30.160.20">
    <property type="match status" value="1"/>
</dbReference>
<dbReference type="Gene3D" id="3.30.70.1660">
    <property type="match status" value="1"/>
</dbReference>
<dbReference type="Gene3D" id="1.20.58.410">
    <property type="entry name" value="Release factor"/>
    <property type="match status" value="1"/>
</dbReference>
<dbReference type="HAMAP" id="MF_00094">
    <property type="entry name" value="Rel_fac_2"/>
    <property type="match status" value="1"/>
</dbReference>
<dbReference type="InterPro" id="IPR005139">
    <property type="entry name" value="PCRF"/>
</dbReference>
<dbReference type="InterPro" id="IPR000352">
    <property type="entry name" value="Pep_chain_release_fac_I"/>
</dbReference>
<dbReference type="InterPro" id="IPR045853">
    <property type="entry name" value="Pep_chain_release_fac_I_sf"/>
</dbReference>
<dbReference type="InterPro" id="IPR004374">
    <property type="entry name" value="PrfB"/>
</dbReference>
<dbReference type="NCBIfam" id="TIGR00020">
    <property type="entry name" value="prfB"/>
    <property type="match status" value="1"/>
</dbReference>
<dbReference type="PANTHER" id="PTHR43116:SF3">
    <property type="entry name" value="CLASS I PEPTIDE CHAIN RELEASE FACTOR"/>
    <property type="match status" value="1"/>
</dbReference>
<dbReference type="PANTHER" id="PTHR43116">
    <property type="entry name" value="PEPTIDE CHAIN RELEASE FACTOR 2"/>
    <property type="match status" value="1"/>
</dbReference>
<dbReference type="Pfam" id="PF03462">
    <property type="entry name" value="PCRF"/>
    <property type="match status" value="1"/>
</dbReference>
<dbReference type="Pfam" id="PF00472">
    <property type="entry name" value="RF-1"/>
    <property type="match status" value="1"/>
</dbReference>
<dbReference type="SMART" id="SM00937">
    <property type="entry name" value="PCRF"/>
    <property type="match status" value="1"/>
</dbReference>
<dbReference type="SUPFAM" id="SSF75620">
    <property type="entry name" value="Release factor"/>
    <property type="match status" value="1"/>
</dbReference>
<dbReference type="PROSITE" id="PS00745">
    <property type="entry name" value="RF_PROK_I"/>
    <property type="match status" value="1"/>
</dbReference>
<sequence>MAQPMLIDLEELVERLDRIGVRLCLPSKRQQIEQLEHEAADPDLWQDPQRAQSLLRRLSQLRDLVQEWETLSQQARDLLELRALASDDLELAGQVEQEATELAERVRQLELRLLLTGQYDGHDAILAVHAGTGGVDAQDWAEMLLRMYLRWAQRAGFAAEVVDLLEGEEAGIKSATVEVRGPYAYGYLKGEAGTHRLVRLSPFDAAHRRHTSFALVEVLPLVEEDDDVEIREEDIRIDTFRASGHGGQHVNKTESAVRITHLPTGIVVTCQNERSQIQNRETAMKILKARLLELKIRQRQEEQARLKGKPVVTGWGNRIRSYVLHPYTMVTDHRTEVSTPNIQAVLEGEIDPFIEAYLHQQAAEGEETAAASDR</sequence>
<feature type="chain" id="PRO_1000193560" description="Peptide chain release factor 2">
    <location>
        <begin position="1"/>
        <end position="374"/>
    </location>
</feature>
<feature type="modified residue" description="N5-methylglutamine" evidence="1">
    <location>
        <position position="248"/>
    </location>
</feature>
<reference key="1">
    <citation type="journal article" date="2009" name="PLoS ONE">
        <title>Complete genome sequence of the aerobic CO-oxidizing thermophile Thermomicrobium roseum.</title>
        <authorList>
            <person name="Wu D."/>
            <person name="Raymond J."/>
            <person name="Wu M."/>
            <person name="Chatterji S."/>
            <person name="Ren Q."/>
            <person name="Graham J.E."/>
            <person name="Bryant D.A."/>
            <person name="Robb F."/>
            <person name="Colman A."/>
            <person name="Tallon L.J."/>
            <person name="Badger J.H."/>
            <person name="Madupu R."/>
            <person name="Ward N.L."/>
            <person name="Eisen J.A."/>
        </authorList>
    </citation>
    <scope>NUCLEOTIDE SEQUENCE [LARGE SCALE GENOMIC DNA]</scope>
    <source>
        <strain>ATCC 27502 / DSM 5159 / P-2</strain>
    </source>
</reference>
<keyword id="KW-0963">Cytoplasm</keyword>
<keyword id="KW-0488">Methylation</keyword>
<keyword id="KW-0648">Protein biosynthesis</keyword>
<keyword id="KW-1185">Reference proteome</keyword>
<gene>
    <name evidence="1" type="primary">prfB</name>
    <name type="ordered locus">trd_1636</name>
</gene>
<evidence type="ECO:0000255" key="1">
    <source>
        <dbReference type="HAMAP-Rule" id="MF_00094"/>
    </source>
</evidence>
<accession>B9L0E3</accession>
<proteinExistence type="inferred from homology"/>